<feature type="chain" id="PRO_1000068751" description="tRNA(Met) cytidine acetate ligase">
    <location>
        <begin position="1"/>
        <end position="409"/>
    </location>
</feature>
<feature type="binding site" evidence="1">
    <location>
        <begin position="7"/>
        <end position="20"/>
    </location>
    <ligand>
        <name>ATP</name>
        <dbReference type="ChEBI" id="CHEBI:30616"/>
    </ligand>
</feature>
<feature type="binding site" evidence="1">
    <location>
        <position position="102"/>
    </location>
    <ligand>
        <name>ATP</name>
        <dbReference type="ChEBI" id="CHEBI:30616"/>
    </ligand>
</feature>
<feature type="binding site" evidence="1">
    <location>
        <position position="169"/>
    </location>
    <ligand>
        <name>ATP</name>
        <dbReference type="ChEBI" id="CHEBI:30616"/>
    </ligand>
</feature>
<feature type="binding site" evidence="1">
    <location>
        <position position="194"/>
    </location>
    <ligand>
        <name>ATP</name>
        <dbReference type="ChEBI" id="CHEBI:30616"/>
    </ligand>
</feature>
<accession>A7GG76</accession>
<sequence>MNVSAIVVEYNPMHNGHLYHIEKTKKLTNCDALVCIMSGNFVQRGFPSILDKWTKANMAISNGVDLVIELPTLYSLSSAEFFSFGAVSILDSLNIINSICFGSEIGNINALQDIATTLLEEPLEYKILLKNYLDKGISFAKARNLALVELNRDNKIMSENISKILSLSNNILGIEYLKSLLLLNSSIKPFTITREGADYKDENLHEEYSSASSIRKYLKENKNINILKDFLPLEGFLEFKRLITKGYNFSMEDSMINYIRYKYISGYKNLHNLIDVSEGLDNRIYKSLEKNFTYDSLVGEIKSKRYAYSRIGRILCQYFIGFENYDLNSLLKSTPNYMRVLASNERGLKVLKEVKKHSSINIYTKLPKNTNTLLSLDIKATNAYSLLNNNIRFNEDYFRSPTIIKNTIY</sequence>
<protein>
    <recommendedName>
        <fullName evidence="1">tRNA(Met) cytidine acetate ligase</fullName>
        <ecNumber evidence="1">6.3.4.-</ecNumber>
    </recommendedName>
</protein>
<keyword id="KW-0067">ATP-binding</keyword>
<keyword id="KW-0963">Cytoplasm</keyword>
<keyword id="KW-0436">Ligase</keyword>
<keyword id="KW-0547">Nucleotide-binding</keyword>
<keyword id="KW-0694">RNA-binding</keyword>
<keyword id="KW-0819">tRNA processing</keyword>
<keyword id="KW-0820">tRNA-binding</keyword>
<reference key="1">
    <citation type="submission" date="2007-06" db="EMBL/GenBank/DDBJ databases">
        <authorList>
            <person name="Brinkac L.M."/>
            <person name="Daugherty S."/>
            <person name="Dodson R.J."/>
            <person name="Madupu R."/>
            <person name="Brown J.L."/>
            <person name="Bruce D."/>
            <person name="Detter C."/>
            <person name="Munk C."/>
            <person name="Smith L.A."/>
            <person name="Smith T.J."/>
            <person name="White O."/>
            <person name="Brettin T.S."/>
        </authorList>
    </citation>
    <scope>NUCLEOTIDE SEQUENCE [LARGE SCALE GENOMIC DNA]</scope>
    <source>
        <strain>Langeland / NCTC 10281 / Type F</strain>
    </source>
</reference>
<comment type="function">
    <text evidence="1">Catalyzes the formation of N(4)-acetylcytidine (ac(4)C) at the wobble position of elongator tRNA(Met), using acetate and ATP as substrates. First activates an acetate ion to form acetyladenylate (Ac-AMP) and then transfers the acetyl group to tRNA to form ac(4)C34.</text>
</comment>
<comment type="catalytic activity">
    <reaction evidence="1">
        <text>cytidine(34) in elongator tRNA(Met) + acetate + ATP = N(4)-acetylcytidine(34) in elongator tRNA(Met) + AMP + diphosphate</text>
        <dbReference type="Rhea" id="RHEA:58144"/>
        <dbReference type="Rhea" id="RHEA-COMP:10693"/>
        <dbReference type="Rhea" id="RHEA-COMP:10694"/>
        <dbReference type="ChEBI" id="CHEBI:30089"/>
        <dbReference type="ChEBI" id="CHEBI:30616"/>
        <dbReference type="ChEBI" id="CHEBI:33019"/>
        <dbReference type="ChEBI" id="CHEBI:74900"/>
        <dbReference type="ChEBI" id="CHEBI:82748"/>
        <dbReference type="ChEBI" id="CHEBI:456215"/>
    </reaction>
</comment>
<comment type="subcellular location">
    <subcellularLocation>
        <location evidence="1">Cytoplasm</location>
    </subcellularLocation>
</comment>
<comment type="similarity">
    <text evidence="1">Belongs to the TmcAL family.</text>
</comment>
<proteinExistence type="inferred from homology"/>
<evidence type="ECO:0000255" key="1">
    <source>
        <dbReference type="HAMAP-Rule" id="MF_01539"/>
    </source>
</evidence>
<dbReference type="EC" id="6.3.4.-" evidence="1"/>
<dbReference type="EMBL" id="CP000728">
    <property type="protein sequence ID" value="ABS42452.1"/>
    <property type="molecule type" value="Genomic_DNA"/>
</dbReference>
<dbReference type="RefSeq" id="WP_012100412.1">
    <property type="nucleotide sequence ID" value="NC_009699.1"/>
</dbReference>
<dbReference type="SMR" id="A7GG76"/>
<dbReference type="KEGG" id="cbf:CLI_2551"/>
<dbReference type="HOGENOM" id="CLU_038915_0_1_9"/>
<dbReference type="Proteomes" id="UP000002410">
    <property type="component" value="Chromosome"/>
</dbReference>
<dbReference type="GO" id="GO:0005737">
    <property type="term" value="C:cytoplasm"/>
    <property type="evidence" value="ECO:0007669"/>
    <property type="project" value="UniProtKB-SubCell"/>
</dbReference>
<dbReference type="GO" id="GO:0005524">
    <property type="term" value="F:ATP binding"/>
    <property type="evidence" value="ECO:0007669"/>
    <property type="project" value="UniProtKB-KW"/>
</dbReference>
<dbReference type="GO" id="GO:0016879">
    <property type="term" value="F:ligase activity, forming carbon-nitrogen bonds"/>
    <property type="evidence" value="ECO:0007669"/>
    <property type="project" value="UniProtKB-UniRule"/>
</dbReference>
<dbReference type="GO" id="GO:0000049">
    <property type="term" value="F:tRNA binding"/>
    <property type="evidence" value="ECO:0007669"/>
    <property type="project" value="UniProtKB-KW"/>
</dbReference>
<dbReference type="GO" id="GO:0006400">
    <property type="term" value="P:tRNA modification"/>
    <property type="evidence" value="ECO:0007669"/>
    <property type="project" value="UniProtKB-UniRule"/>
</dbReference>
<dbReference type="Gene3D" id="3.40.50.620">
    <property type="entry name" value="HUPs"/>
    <property type="match status" value="1"/>
</dbReference>
<dbReference type="HAMAP" id="MF_01539">
    <property type="entry name" value="TmcAL"/>
    <property type="match status" value="1"/>
</dbReference>
<dbReference type="InterPro" id="IPR014729">
    <property type="entry name" value="Rossmann-like_a/b/a_fold"/>
</dbReference>
<dbReference type="InterPro" id="IPR008513">
    <property type="entry name" value="tRNA(Met)_cyd_acetate_ligase"/>
</dbReference>
<dbReference type="NCBIfam" id="NF010191">
    <property type="entry name" value="PRK13670.1"/>
    <property type="match status" value="1"/>
</dbReference>
<dbReference type="PANTHER" id="PTHR37825">
    <property type="entry name" value="TRNA(MET) CYTIDINE ACETATE LIGASE"/>
    <property type="match status" value="1"/>
</dbReference>
<dbReference type="PANTHER" id="PTHR37825:SF1">
    <property type="entry name" value="TRNA(MET) CYTIDINE ACETATE LIGASE"/>
    <property type="match status" value="1"/>
</dbReference>
<dbReference type="Pfam" id="PF05636">
    <property type="entry name" value="HIGH_NTase1"/>
    <property type="match status" value="1"/>
</dbReference>
<dbReference type="SUPFAM" id="SSF52374">
    <property type="entry name" value="Nucleotidylyl transferase"/>
    <property type="match status" value="1"/>
</dbReference>
<gene>
    <name evidence="1" type="primary">tmcAL</name>
    <name type="ordered locus">CLI_2551</name>
</gene>
<name>TMCAL_CLOBL</name>
<organism>
    <name type="scientific">Clostridium botulinum (strain Langeland / NCTC 10281 / Type F)</name>
    <dbReference type="NCBI Taxonomy" id="441772"/>
    <lineage>
        <taxon>Bacteria</taxon>
        <taxon>Bacillati</taxon>
        <taxon>Bacillota</taxon>
        <taxon>Clostridia</taxon>
        <taxon>Eubacteriales</taxon>
        <taxon>Clostridiaceae</taxon>
        <taxon>Clostridium</taxon>
    </lineage>
</organism>